<comment type="function">
    <text evidence="2">Acts as a translational activator of mitochondrially-encoded cytochrome c oxidase 1.</text>
</comment>
<comment type="subcellular location">
    <subcellularLocation>
        <location evidence="2">Mitochondrion</location>
    </subcellularLocation>
</comment>
<comment type="similarity">
    <text evidence="3">Belongs to the TACO1 family.</text>
</comment>
<sequence>MMSWAAARLTETAARCFRARCLGFRVGPWCVSQHENSSYGAAPHRTLRVSAVAFAGHNKWSKVRHIKGPKDMERSRIFSKLTLSIRLAVKEGGPNPENNSSLANILEVCRSKNMPKSTIESALKSEKNKGIYLLYEGRGPGGSSLLIEALSNSGPKCHLEIKYILNKNGGMMTEGARHFFDKKGVVVVGVEDREKKAVNLERALELAIEAGAEDVREAEDEEEEKNLFKFICDASSLHQVRKKLDSLGLCSVSCSLEFIPHSKVQLSEPELEQAVHLIQALSNHEDVIHVYDNIE</sequence>
<keyword id="KW-0007">Acetylation</keyword>
<keyword id="KW-0010">Activator</keyword>
<keyword id="KW-0175">Coiled coil</keyword>
<keyword id="KW-0496">Mitochondrion</keyword>
<keyword id="KW-1185">Reference proteome</keyword>
<keyword id="KW-0810">Translation regulation</keyword>
<dbReference type="EMBL" id="CH473948">
    <property type="protein sequence ID" value="EDM06355.1"/>
    <property type="molecule type" value="Genomic_DNA"/>
</dbReference>
<dbReference type="EMBL" id="BC166900">
    <property type="protein sequence ID" value="AAI66900.1"/>
    <property type="molecule type" value="mRNA"/>
</dbReference>
<dbReference type="RefSeq" id="NP_001101772.1">
    <property type="nucleotide sequence ID" value="NM_001108302.1"/>
</dbReference>
<dbReference type="SMR" id="B2RYT9"/>
<dbReference type="FunCoup" id="B2RYT9">
    <property type="interactions" value="807"/>
</dbReference>
<dbReference type="STRING" id="10116.ENSRNOP00000061257"/>
<dbReference type="PhosphoSitePlus" id="B2RYT9"/>
<dbReference type="PeptideAtlas" id="B2RYT9"/>
<dbReference type="Ensembl" id="ENSRNOT00000063973.4">
    <property type="protein sequence ID" value="ENSRNOP00000061257.4"/>
    <property type="gene ID" value="ENSRNOG00000008405.8"/>
</dbReference>
<dbReference type="GeneID" id="360645"/>
<dbReference type="KEGG" id="rno:360645"/>
<dbReference type="UCSC" id="RGD:1306784">
    <property type="organism name" value="rat"/>
</dbReference>
<dbReference type="AGR" id="RGD:1306784"/>
<dbReference type="CTD" id="51204"/>
<dbReference type="RGD" id="1306784">
    <property type="gene designation" value="Taco1"/>
</dbReference>
<dbReference type="InParanoid" id="B2RYT9"/>
<dbReference type="OMA" id="NFDIPDE"/>
<dbReference type="OrthoDB" id="2017544at2759"/>
<dbReference type="PhylomeDB" id="B2RYT9"/>
<dbReference type="PRO" id="PR:B2RYT9"/>
<dbReference type="Proteomes" id="UP000002494">
    <property type="component" value="Chromosome 10"/>
</dbReference>
<dbReference type="Proteomes" id="UP000234681">
    <property type="component" value="Chromosome 10"/>
</dbReference>
<dbReference type="GO" id="GO:0005739">
    <property type="term" value="C:mitochondrion"/>
    <property type="evidence" value="ECO:0000266"/>
    <property type="project" value="RGD"/>
</dbReference>
<dbReference type="GO" id="GO:0097177">
    <property type="term" value="F:mitochondrial ribosome binding"/>
    <property type="evidence" value="ECO:0000266"/>
    <property type="project" value="RGD"/>
</dbReference>
<dbReference type="GO" id="GO:0003729">
    <property type="term" value="F:mRNA binding"/>
    <property type="evidence" value="ECO:0000266"/>
    <property type="project" value="RGD"/>
</dbReference>
<dbReference type="GO" id="GO:0019843">
    <property type="term" value="F:rRNA binding"/>
    <property type="evidence" value="ECO:0000266"/>
    <property type="project" value="RGD"/>
</dbReference>
<dbReference type="GO" id="GO:0033617">
    <property type="term" value="P:mitochondrial cytochrome c oxidase assembly"/>
    <property type="evidence" value="ECO:0000266"/>
    <property type="project" value="RGD"/>
</dbReference>
<dbReference type="GO" id="GO:0061743">
    <property type="term" value="P:motor learning"/>
    <property type="evidence" value="ECO:0000266"/>
    <property type="project" value="RGD"/>
</dbReference>
<dbReference type="GO" id="GO:0070129">
    <property type="term" value="P:regulation of mitochondrial translation"/>
    <property type="evidence" value="ECO:0000266"/>
    <property type="project" value="RGD"/>
</dbReference>
<dbReference type="FunFam" id="1.10.10.200:FF:000002">
    <property type="entry name" value="Probable transcriptional regulatory protein CLM62_37755"/>
    <property type="match status" value="1"/>
</dbReference>
<dbReference type="FunFam" id="3.30.70.980:FF:000008">
    <property type="entry name" value="Translational activator of cytochrome c oxidase 1"/>
    <property type="match status" value="1"/>
</dbReference>
<dbReference type="Gene3D" id="1.10.10.200">
    <property type="match status" value="1"/>
</dbReference>
<dbReference type="Gene3D" id="3.30.70.980">
    <property type="match status" value="2"/>
</dbReference>
<dbReference type="InterPro" id="IPR017856">
    <property type="entry name" value="Integrase-like_N"/>
</dbReference>
<dbReference type="InterPro" id="IPR048300">
    <property type="entry name" value="TACO1_YebC-like_2nd/3rd_dom"/>
</dbReference>
<dbReference type="InterPro" id="IPR049083">
    <property type="entry name" value="TACO1_YebC_N"/>
</dbReference>
<dbReference type="InterPro" id="IPR002876">
    <property type="entry name" value="Transcrip_reg_TACO1-like"/>
</dbReference>
<dbReference type="InterPro" id="IPR026564">
    <property type="entry name" value="Transcrip_reg_TACO1-like_dom3"/>
</dbReference>
<dbReference type="InterPro" id="IPR029072">
    <property type="entry name" value="YebC-like"/>
</dbReference>
<dbReference type="PANTHER" id="PTHR12532">
    <property type="entry name" value="TRANSLATIONAL ACTIVATOR OF CYTOCHROME C OXIDASE 1"/>
    <property type="match status" value="1"/>
</dbReference>
<dbReference type="PANTHER" id="PTHR12532:SF0">
    <property type="entry name" value="TRANSLATIONAL ACTIVATOR OF CYTOCHROME C OXIDASE 1"/>
    <property type="match status" value="1"/>
</dbReference>
<dbReference type="Pfam" id="PF20772">
    <property type="entry name" value="TACO1_YebC_N"/>
    <property type="match status" value="1"/>
</dbReference>
<dbReference type="Pfam" id="PF01709">
    <property type="entry name" value="Transcrip_reg"/>
    <property type="match status" value="1"/>
</dbReference>
<dbReference type="SUPFAM" id="SSF75625">
    <property type="entry name" value="YebC-like"/>
    <property type="match status" value="1"/>
</dbReference>
<protein>
    <recommendedName>
        <fullName evidence="2">Translational activator of cytochrome c oxidase 1</fullName>
    </recommendedName>
    <alternativeName>
        <fullName evidence="4">Coiled-coil domain-containing protein 44</fullName>
    </alternativeName>
    <alternativeName>
        <fullName evidence="2">Translational activator of mitochondrially-encoded cytochrome c oxidase I</fullName>
    </alternativeName>
</protein>
<reference evidence="5" key="1">
    <citation type="submission" date="2005-07" db="EMBL/GenBank/DDBJ databases">
        <authorList>
            <person name="Mural R.J."/>
            <person name="Adams M.D."/>
            <person name="Myers E.W."/>
            <person name="Smith H.O."/>
            <person name="Venter J.C."/>
        </authorList>
    </citation>
    <scope>NUCLEOTIDE SEQUENCE [LARGE SCALE GENOMIC DNA]</scope>
    <source>
        <strain evidence="5">Brown Norway</strain>
    </source>
</reference>
<reference evidence="4" key="2">
    <citation type="journal article" date="2004" name="Genome Res.">
        <title>The status, quality, and expansion of the NIH full-length cDNA project: the Mammalian Gene Collection (MGC).</title>
        <authorList>
            <consortium name="The MGC Project Team"/>
        </authorList>
    </citation>
    <scope>NUCLEOTIDE SEQUENCE [LARGE SCALE MRNA]</scope>
    <source>
        <tissue evidence="4">Pituitary</tissue>
    </source>
</reference>
<gene>
    <name evidence="2" type="primary">Taco1</name>
    <name evidence="4 6" type="synonym">Ccdc44</name>
</gene>
<proteinExistence type="evidence at transcript level"/>
<organism>
    <name type="scientific">Rattus norvegicus</name>
    <name type="common">Rat</name>
    <dbReference type="NCBI Taxonomy" id="10116"/>
    <lineage>
        <taxon>Eukaryota</taxon>
        <taxon>Metazoa</taxon>
        <taxon>Chordata</taxon>
        <taxon>Craniata</taxon>
        <taxon>Vertebrata</taxon>
        <taxon>Euteleostomi</taxon>
        <taxon>Mammalia</taxon>
        <taxon>Eutheria</taxon>
        <taxon>Euarchontoglires</taxon>
        <taxon>Glires</taxon>
        <taxon>Rodentia</taxon>
        <taxon>Myomorpha</taxon>
        <taxon>Muroidea</taxon>
        <taxon>Muridae</taxon>
        <taxon>Murinae</taxon>
        <taxon>Rattus</taxon>
    </lineage>
</organism>
<accession>B2RYT9</accession>
<name>TACO1_RAT</name>
<feature type="chain" id="PRO_0000388759" description="Translational activator of cytochrome c oxidase 1">
    <location>
        <begin position="1"/>
        <end position="295"/>
    </location>
</feature>
<feature type="coiled-coil region" evidence="3">
    <location>
        <begin position="190"/>
        <end position="225"/>
    </location>
</feature>
<feature type="modified residue" description="N6-acetyllysine" evidence="1">
    <location>
        <position position="162"/>
    </location>
</feature>
<evidence type="ECO:0000250" key="1">
    <source>
        <dbReference type="UniProtKB" id="Q8K0Z7"/>
    </source>
</evidence>
<evidence type="ECO:0000250" key="2">
    <source>
        <dbReference type="UniProtKB" id="Q9BSH4"/>
    </source>
</evidence>
<evidence type="ECO:0000255" key="3"/>
<evidence type="ECO:0000312" key="4">
    <source>
        <dbReference type="EMBL" id="AAI66900.1"/>
    </source>
</evidence>
<evidence type="ECO:0000312" key="5">
    <source>
        <dbReference type="EMBL" id="EDM06355.1"/>
    </source>
</evidence>
<evidence type="ECO:0000312" key="6">
    <source>
        <dbReference type="RGD" id="1306784"/>
    </source>
</evidence>